<sequence length="335" mass="36927">MNQWMELADRVLAGAEVTDEEALSILHCPDEDILLLMHGAFHIRKHFYGKKVKLNMIMNAKSGLCPENCGYCSQSAISKAPIESYRMVNKETLLEGAKRAHDLNIGTYCIVASGRGPSNREVDQVVDAVQEIKETYGLKICACLGLLKPEQAKRLKDAGVDRYNHNLNTSQRNHSNITTSHTYDDRVNTVEIAKESGLSPCSGAIIGMKETKQDVIDIAKSLKALDADSIPVNFLHAIDGTPLEGVNELNPLYCLKVLALFRFINPSKEIRISGGREVNLRTLQPLGLYAANSIFVGDYLTTAGQEETEDHKMLSDLGFEVESVEEMKASLSAKS</sequence>
<gene>
    <name evidence="1" type="primary">bioB</name>
    <name type="ordered locus">BSU30200</name>
</gene>
<name>BIOB_BACSU</name>
<organism>
    <name type="scientific">Bacillus subtilis (strain 168)</name>
    <dbReference type="NCBI Taxonomy" id="224308"/>
    <lineage>
        <taxon>Bacteria</taxon>
        <taxon>Bacillati</taxon>
        <taxon>Bacillota</taxon>
        <taxon>Bacilli</taxon>
        <taxon>Bacillales</taxon>
        <taxon>Bacillaceae</taxon>
        <taxon>Bacillus</taxon>
    </lineage>
</organism>
<evidence type="ECO:0000255" key="1">
    <source>
        <dbReference type="HAMAP-Rule" id="MF_01694"/>
    </source>
</evidence>
<evidence type="ECO:0000255" key="2">
    <source>
        <dbReference type="PROSITE-ProRule" id="PRU01266"/>
    </source>
</evidence>
<keyword id="KW-0001">2Fe-2S</keyword>
<keyword id="KW-0004">4Fe-4S</keyword>
<keyword id="KW-0093">Biotin biosynthesis</keyword>
<keyword id="KW-0408">Iron</keyword>
<keyword id="KW-0411">Iron-sulfur</keyword>
<keyword id="KW-0479">Metal-binding</keyword>
<keyword id="KW-1185">Reference proteome</keyword>
<keyword id="KW-0949">S-adenosyl-L-methionine</keyword>
<keyword id="KW-0808">Transferase</keyword>
<feature type="chain" id="PRO_0000185546" description="Biotin synthase">
    <location>
        <begin position="1"/>
        <end position="335"/>
    </location>
</feature>
<feature type="domain" description="Radical SAM core" evidence="2">
    <location>
        <begin position="47"/>
        <end position="276"/>
    </location>
</feature>
<feature type="binding site" evidence="1">
    <location>
        <position position="65"/>
    </location>
    <ligand>
        <name>[4Fe-4S] cluster</name>
        <dbReference type="ChEBI" id="CHEBI:49883"/>
        <note>4Fe-4S-S-AdoMet</note>
    </ligand>
</feature>
<feature type="binding site" evidence="1">
    <location>
        <position position="69"/>
    </location>
    <ligand>
        <name>[4Fe-4S] cluster</name>
        <dbReference type="ChEBI" id="CHEBI:49883"/>
        <note>4Fe-4S-S-AdoMet</note>
    </ligand>
</feature>
<feature type="binding site" evidence="1">
    <location>
        <position position="72"/>
    </location>
    <ligand>
        <name>[4Fe-4S] cluster</name>
        <dbReference type="ChEBI" id="CHEBI:49883"/>
        <note>4Fe-4S-S-AdoMet</note>
    </ligand>
</feature>
<feature type="binding site" evidence="1">
    <location>
        <position position="109"/>
    </location>
    <ligand>
        <name>[2Fe-2S] cluster</name>
        <dbReference type="ChEBI" id="CHEBI:190135"/>
    </ligand>
</feature>
<feature type="binding site" evidence="1">
    <location>
        <position position="141"/>
    </location>
    <ligand>
        <name>[2Fe-2S] cluster</name>
        <dbReference type="ChEBI" id="CHEBI:190135"/>
    </ligand>
</feature>
<feature type="binding site" evidence="1">
    <location>
        <position position="201"/>
    </location>
    <ligand>
        <name>[2Fe-2S] cluster</name>
        <dbReference type="ChEBI" id="CHEBI:190135"/>
    </ligand>
</feature>
<feature type="binding site" evidence="1">
    <location>
        <position position="271"/>
    </location>
    <ligand>
        <name>[2Fe-2S] cluster</name>
        <dbReference type="ChEBI" id="CHEBI:190135"/>
    </ligand>
</feature>
<proteinExistence type="inferred from homology"/>
<reference key="1">
    <citation type="journal article" date="1996" name="J. Bacteriol.">
        <title>Cloning, sequencing, and characterization of the Bacillus subtilis biotin biosynthetic operon.</title>
        <authorList>
            <person name="Bower S."/>
            <person name="Perkins J.B."/>
            <person name="Yocum R.R."/>
            <person name="Howitt C.L."/>
            <person name="Rahaim P."/>
            <person name="Pero J."/>
        </authorList>
    </citation>
    <scope>NUCLEOTIDE SEQUENCE [GENOMIC DNA]</scope>
</reference>
<reference key="2">
    <citation type="journal article" date="1997" name="Microbiology">
        <title>Sequencing and functional annotation of the Bacillus subtilis genes in the 200 kb rrnB-dnaB region.</title>
        <authorList>
            <person name="Lapidus A."/>
            <person name="Galleron N."/>
            <person name="Sorokin A."/>
            <person name="Ehrlich S.D."/>
        </authorList>
    </citation>
    <scope>NUCLEOTIDE SEQUENCE [GENOMIC DNA]</scope>
    <source>
        <strain>168</strain>
    </source>
</reference>
<reference key="3">
    <citation type="journal article" date="1997" name="Nature">
        <title>The complete genome sequence of the Gram-positive bacterium Bacillus subtilis.</title>
        <authorList>
            <person name="Kunst F."/>
            <person name="Ogasawara N."/>
            <person name="Moszer I."/>
            <person name="Albertini A.M."/>
            <person name="Alloni G."/>
            <person name="Azevedo V."/>
            <person name="Bertero M.G."/>
            <person name="Bessieres P."/>
            <person name="Bolotin A."/>
            <person name="Borchert S."/>
            <person name="Borriss R."/>
            <person name="Boursier L."/>
            <person name="Brans A."/>
            <person name="Braun M."/>
            <person name="Brignell S.C."/>
            <person name="Bron S."/>
            <person name="Brouillet S."/>
            <person name="Bruschi C.V."/>
            <person name="Caldwell B."/>
            <person name="Capuano V."/>
            <person name="Carter N.M."/>
            <person name="Choi S.-K."/>
            <person name="Codani J.-J."/>
            <person name="Connerton I.F."/>
            <person name="Cummings N.J."/>
            <person name="Daniel R.A."/>
            <person name="Denizot F."/>
            <person name="Devine K.M."/>
            <person name="Duesterhoeft A."/>
            <person name="Ehrlich S.D."/>
            <person name="Emmerson P.T."/>
            <person name="Entian K.-D."/>
            <person name="Errington J."/>
            <person name="Fabret C."/>
            <person name="Ferrari E."/>
            <person name="Foulger D."/>
            <person name="Fritz C."/>
            <person name="Fujita M."/>
            <person name="Fujita Y."/>
            <person name="Fuma S."/>
            <person name="Galizzi A."/>
            <person name="Galleron N."/>
            <person name="Ghim S.-Y."/>
            <person name="Glaser P."/>
            <person name="Goffeau A."/>
            <person name="Golightly E.J."/>
            <person name="Grandi G."/>
            <person name="Guiseppi G."/>
            <person name="Guy B.J."/>
            <person name="Haga K."/>
            <person name="Haiech J."/>
            <person name="Harwood C.R."/>
            <person name="Henaut A."/>
            <person name="Hilbert H."/>
            <person name="Holsappel S."/>
            <person name="Hosono S."/>
            <person name="Hullo M.-F."/>
            <person name="Itaya M."/>
            <person name="Jones L.-M."/>
            <person name="Joris B."/>
            <person name="Karamata D."/>
            <person name="Kasahara Y."/>
            <person name="Klaerr-Blanchard M."/>
            <person name="Klein C."/>
            <person name="Kobayashi Y."/>
            <person name="Koetter P."/>
            <person name="Koningstein G."/>
            <person name="Krogh S."/>
            <person name="Kumano M."/>
            <person name="Kurita K."/>
            <person name="Lapidus A."/>
            <person name="Lardinois S."/>
            <person name="Lauber J."/>
            <person name="Lazarevic V."/>
            <person name="Lee S.-M."/>
            <person name="Levine A."/>
            <person name="Liu H."/>
            <person name="Masuda S."/>
            <person name="Mauel C."/>
            <person name="Medigue C."/>
            <person name="Medina N."/>
            <person name="Mellado R.P."/>
            <person name="Mizuno M."/>
            <person name="Moestl D."/>
            <person name="Nakai S."/>
            <person name="Noback M."/>
            <person name="Noone D."/>
            <person name="O'Reilly M."/>
            <person name="Ogawa K."/>
            <person name="Ogiwara A."/>
            <person name="Oudega B."/>
            <person name="Park S.-H."/>
            <person name="Parro V."/>
            <person name="Pohl T.M."/>
            <person name="Portetelle D."/>
            <person name="Porwollik S."/>
            <person name="Prescott A.M."/>
            <person name="Presecan E."/>
            <person name="Pujic P."/>
            <person name="Purnelle B."/>
            <person name="Rapoport G."/>
            <person name="Rey M."/>
            <person name="Reynolds S."/>
            <person name="Rieger M."/>
            <person name="Rivolta C."/>
            <person name="Rocha E."/>
            <person name="Roche B."/>
            <person name="Rose M."/>
            <person name="Sadaie Y."/>
            <person name="Sato T."/>
            <person name="Scanlan E."/>
            <person name="Schleich S."/>
            <person name="Schroeter R."/>
            <person name="Scoffone F."/>
            <person name="Sekiguchi J."/>
            <person name="Sekowska A."/>
            <person name="Seror S.J."/>
            <person name="Serror P."/>
            <person name="Shin B.-S."/>
            <person name="Soldo B."/>
            <person name="Sorokin A."/>
            <person name="Tacconi E."/>
            <person name="Takagi T."/>
            <person name="Takahashi H."/>
            <person name="Takemaru K."/>
            <person name="Takeuchi M."/>
            <person name="Tamakoshi A."/>
            <person name="Tanaka T."/>
            <person name="Terpstra P."/>
            <person name="Tognoni A."/>
            <person name="Tosato V."/>
            <person name="Uchiyama S."/>
            <person name="Vandenbol M."/>
            <person name="Vannier F."/>
            <person name="Vassarotti A."/>
            <person name="Viari A."/>
            <person name="Wambutt R."/>
            <person name="Wedler E."/>
            <person name="Wedler H."/>
            <person name="Weitzenegger T."/>
            <person name="Winters P."/>
            <person name="Wipat A."/>
            <person name="Yamamoto H."/>
            <person name="Yamane K."/>
            <person name="Yasumoto K."/>
            <person name="Yata K."/>
            <person name="Yoshida K."/>
            <person name="Yoshikawa H.-F."/>
            <person name="Zumstein E."/>
            <person name="Yoshikawa H."/>
            <person name="Danchin A."/>
        </authorList>
    </citation>
    <scope>NUCLEOTIDE SEQUENCE [LARGE SCALE GENOMIC DNA]</scope>
    <source>
        <strain>168</strain>
    </source>
</reference>
<accession>P53557</accession>
<comment type="function">
    <text evidence="1">Catalyzes the conversion of dethiobiotin (DTB) to biotin by the insertion of a sulfur atom into dethiobiotin via a radical-based mechanism.</text>
</comment>
<comment type="catalytic activity">
    <reaction evidence="1">
        <text>(4R,5S)-dethiobiotin + (sulfur carrier)-SH + 2 reduced [2Fe-2S]-[ferredoxin] + 2 S-adenosyl-L-methionine = (sulfur carrier)-H + biotin + 2 5'-deoxyadenosine + 2 L-methionine + 2 oxidized [2Fe-2S]-[ferredoxin]</text>
        <dbReference type="Rhea" id="RHEA:22060"/>
        <dbReference type="Rhea" id="RHEA-COMP:10000"/>
        <dbReference type="Rhea" id="RHEA-COMP:10001"/>
        <dbReference type="Rhea" id="RHEA-COMP:14737"/>
        <dbReference type="Rhea" id="RHEA-COMP:14739"/>
        <dbReference type="ChEBI" id="CHEBI:17319"/>
        <dbReference type="ChEBI" id="CHEBI:29917"/>
        <dbReference type="ChEBI" id="CHEBI:33737"/>
        <dbReference type="ChEBI" id="CHEBI:33738"/>
        <dbReference type="ChEBI" id="CHEBI:57586"/>
        <dbReference type="ChEBI" id="CHEBI:57844"/>
        <dbReference type="ChEBI" id="CHEBI:59789"/>
        <dbReference type="ChEBI" id="CHEBI:64428"/>
        <dbReference type="ChEBI" id="CHEBI:149473"/>
        <dbReference type="EC" id="2.8.1.6"/>
    </reaction>
</comment>
<comment type="cofactor">
    <cofactor evidence="1">
        <name>[4Fe-4S] cluster</name>
        <dbReference type="ChEBI" id="CHEBI:49883"/>
    </cofactor>
    <text evidence="1">Binds 1 [4Fe-4S] cluster. The cluster is coordinated with 3 cysteines and an exchangeable S-adenosyl-L-methionine.</text>
</comment>
<comment type="cofactor">
    <cofactor evidence="1">
        <name>[2Fe-2S] cluster</name>
        <dbReference type="ChEBI" id="CHEBI:190135"/>
    </cofactor>
    <text evidence="1">Binds 1 [2Fe-2S] cluster. The cluster is coordinated with 3 cysteines and 1 arginine.</text>
</comment>
<comment type="pathway">
    <text evidence="1">Cofactor biosynthesis; biotin biosynthesis; biotin from 7,8-diaminononanoate: step 2/2.</text>
</comment>
<comment type="subunit">
    <text evidence="1">Homodimer.</text>
</comment>
<comment type="similarity">
    <text evidence="1">Belongs to the radical SAM superfamily. Biotin synthase family.</text>
</comment>
<protein>
    <recommendedName>
        <fullName evidence="1">Biotin synthase</fullName>
        <ecNumber evidence="1">2.8.1.6</ecNumber>
    </recommendedName>
</protein>
<dbReference type="EC" id="2.8.1.6" evidence="1"/>
<dbReference type="EMBL" id="U51868">
    <property type="protein sequence ID" value="AAB17461.1"/>
    <property type="molecule type" value="Genomic_DNA"/>
</dbReference>
<dbReference type="EMBL" id="AF008220">
    <property type="protein sequence ID" value="AAC00265.1"/>
    <property type="molecule type" value="Genomic_DNA"/>
</dbReference>
<dbReference type="EMBL" id="AL009126">
    <property type="protein sequence ID" value="CAB14998.1"/>
    <property type="molecule type" value="Genomic_DNA"/>
</dbReference>
<dbReference type="PIR" id="D69594">
    <property type="entry name" value="D69594"/>
</dbReference>
<dbReference type="RefSeq" id="NP_390898.1">
    <property type="nucleotide sequence ID" value="NC_000964.3"/>
</dbReference>
<dbReference type="RefSeq" id="WP_004398967.1">
    <property type="nucleotide sequence ID" value="NZ_OZ025638.1"/>
</dbReference>
<dbReference type="SMR" id="P53557"/>
<dbReference type="FunCoup" id="P53557">
    <property type="interactions" value="535"/>
</dbReference>
<dbReference type="IntAct" id="P53557">
    <property type="interactions" value="1"/>
</dbReference>
<dbReference type="MINT" id="P53557"/>
<dbReference type="STRING" id="224308.BSU30200"/>
<dbReference type="PaxDb" id="224308-BSU30200"/>
<dbReference type="DNASU" id="938180"/>
<dbReference type="EnsemblBacteria" id="CAB14998">
    <property type="protein sequence ID" value="CAB14998"/>
    <property type="gene ID" value="BSU_30200"/>
</dbReference>
<dbReference type="GeneID" id="938180"/>
<dbReference type="KEGG" id="bsu:BSU30200"/>
<dbReference type="PATRIC" id="fig|224308.179.peg.3276"/>
<dbReference type="eggNOG" id="COG0502">
    <property type="taxonomic scope" value="Bacteria"/>
</dbReference>
<dbReference type="InParanoid" id="P53557"/>
<dbReference type="OrthoDB" id="9786826at2"/>
<dbReference type="PhylomeDB" id="P53557"/>
<dbReference type="BioCyc" id="BSUB:BSU30200-MONOMER"/>
<dbReference type="UniPathway" id="UPA00078">
    <property type="reaction ID" value="UER00162"/>
</dbReference>
<dbReference type="Proteomes" id="UP000001570">
    <property type="component" value="Chromosome"/>
</dbReference>
<dbReference type="GO" id="GO:0051537">
    <property type="term" value="F:2 iron, 2 sulfur cluster binding"/>
    <property type="evidence" value="ECO:0000318"/>
    <property type="project" value="GO_Central"/>
</dbReference>
<dbReference type="GO" id="GO:0051539">
    <property type="term" value="F:4 iron, 4 sulfur cluster binding"/>
    <property type="evidence" value="ECO:0007669"/>
    <property type="project" value="UniProtKB-KW"/>
</dbReference>
<dbReference type="GO" id="GO:0004076">
    <property type="term" value="F:biotin synthase activity"/>
    <property type="evidence" value="ECO:0000318"/>
    <property type="project" value="GO_Central"/>
</dbReference>
<dbReference type="GO" id="GO:0005506">
    <property type="term" value="F:iron ion binding"/>
    <property type="evidence" value="ECO:0007669"/>
    <property type="project" value="UniProtKB-UniRule"/>
</dbReference>
<dbReference type="GO" id="GO:0009102">
    <property type="term" value="P:biotin biosynthetic process"/>
    <property type="evidence" value="ECO:0000318"/>
    <property type="project" value="GO_Central"/>
</dbReference>
<dbReference type="CDD" id="cd01335">
    <property type="entry name" value="Radical_SAM"/>
    <property type="match status" value="1"/>
</dbReference>
<dbReference type="FunFam" id="3.20.20.70:FF:000026">
    <property type="entry name" value="Biotin synthase"/>
    <property type="match status" value="1"/>
</dbReference>
<dbReference type="Gene3D" id="3.20.20.70">
    <property type="entry name" value="Aldolase class I"/>
    <property type="match status" value="1"/>
</dbReference>
<dbReference type="HAMAP" id="MF_01694">
    <property type="entry name" value="BioB"/>
    <property type="match status" value="1"/>
</dbReference>
<dbReference type="InterPro" id="IPR013785">
    <property type="entry name" value="Aldolase_TIM"/>
</dbReference>
<dbReference type="InterPro" id="IPR010722">
    <property type="entry name" value="BATS_dom"/>
</dbReference>
<dbReference type="InterPro" id="IPR002684">
    <property type="entry name" value="Biotin_synth/BioAB"/>
</dbReference>
<dbReference type="InterPro" id="IPR024177">
    <property type="entry name" value="Biotin_synthase"/>
</dbReference>
<dbReference type="InterPro" id="IPR006638">
    <property type="entry name" value="Elp3/MiaA/NifB-like_rSAM"/>
</dbReference>
<dbReference type="InterPro" id="IPR007197">
    <property type="entry name" value="rSAM"/>
</dbReference>
<dbReference type="NCBIfam" id="TIGR00433">
    <property type="entry name" value="bioB"/>
    <property type="match status" value="1"/>
</dbReference>
<dbReference type="PANTHER" id="PTHR22976">
    <property type="entry name" value="BIOTIN SYNTHASE"/>
    <property type="match status" value="1"/>
</dbReference>
<dbReference type="PANTHER" id="PTHR22976:SF2">
    <property type="entry name" value="BIOTIN SYNTHASE, MITOCHONDRIAL"/>
    <property type="match status" value="1"/>
</dbReference>
<dbReference type="Pfam" id="PF06968">
    <property type="entry name" value="BATS"/>
    <property type="match status" value="1"/>
</dbReference>
<dbReference type="Pfam" id="PF04055">
    <property type="entry name" value="Radical_SAM"/>
    <property type="match status" value="1"/>
</dbReference>
<dbReference type="PIRSF" id="PIRSF001619">
    <property type="entry name" value="Biotin_synth"/>
    <property type="match status" value="1"/>
</dbReference>
<dbReference type="SFLD" id="SFLDG01278">
    <property type="entry name" value="biotin_synthase_like"/>
    <property type="match status" value="1"/>
</dbReference>
<dbReference type="SFLD" id="SFLDS00029">
    <property type="entry name" value="Radical_SAM"/>
    <property type="match status" value="1"/>
</dbReference>
<dbReference type="SMART" id="SM00876">
    <property type="entry name" value="BATS"/>
    <property type="match status" value="1"/>
</dbReference>
<dbReference type="SMART" id="SM00729">
    <property type="entry name" value="Elp3"/>
    <property type="match status" value="1"/>
</dbReference>
<dbReference type="SUPFAM" id="SSF102114">
    <property type="entry name" value="Radical SAM enzymes"/>
    <property type="match status" value="1"/>
</dbReference>
<dbReference type="PROSITE" id="PS51918">
    <property type="entry name" value="RADICAL_SAM"/>
    <property type="match status" value="1"/>
</dbReference>